<dbReference type="EC" id="5.3.1.9" evidence="1"/>
<dbReference type="EMBL" id="CP001390">
    <property type="protein sequence ID" value="ACM19857.1"/>
    <property type="molecule type" value="Genomic_DNA"/>
</dbReference>
<dbReference type="RefSeq" id="WP_012646586.1">
    <property type="nucleotide sequence ID" value="NC_011979.1"/>
</dbReference>
<dbReference type="SMR" id="B9M5A2"/>
<dbReference type="STRING" id="316067.Geob_1498"/>
<dbReference type="KEGG" id="geo:Geob_1498"/>
<dbReference type="eggNOG" id="COG0166">
    <property type="taxonomic scope" value="Bacteria"/>
</dbReference>
<dbReference type="HOGENOM" id="CLU_033288_0_0_7"/>
<dbReference type="OrthoDB" id="140919at2"/>
<dbReference type="UniPathway" id="UPA00109">
    <property type="reaction ID" value="UER00181"/>
</dbReference>
<dbReference type="UniPathway" id="UPA00138"/>
<dbReference type="Proteomes" id="UP000007721">
    <property type="component" value="Chromosome"/>
</dbReference>
<dbReference type="GO" id="GO:0005829">
    <property type="term" value="C:cytosol"/>
    <property type="evidence" value="ECO:0007669"/>
    <property type="project" value="TreeGrafter"/>
</dbReference>
<dbReference type="GO" id="GO:0097367">
    <property type="term" value="F:carbohydrate derivative binding"/>
    <property type="evidence" value="ECO:0007669"/>
    <property type="project" value="InterPro"/>
</dbReference>
<dbReference type="GO" id="GO:0004347">
    <property type="term" value="F:glucose-6-phosphate isomerase activity"/>
    <property type="evidence" value="ECO:0007669"/>
    <property type="project" value="UniProtKB-UniRule"/>
</dbReference>
<dbReference type="GO" id="GO:0048029">
    <property type="term" value="F:monosaccharide binding"/>
    <property type="evidence" value="ECO:0007669"/>
    <property type="project" value="TreeGrafter"/>
</dbReference>
<dbReference type="GO" id="GO:0006094">
    <property type="term" value="P:gluconeogenesis"/>
    <property type="evidence" value="ECO:0007669"/>
    <property type="project" value="UniProtKB-UniRule"/>
</dbReference>
<dbReference type="GO" id="GO:0051156">
    <property type="term" value="P:glucose 6-phosphate metabolic process"/>
    <property type="evidence" value="ECO:0007669"/>
    <property type="project" value="TreeGrafter"/>
</dbReference>
<dbReference type="GO" id="GO:0006096">
    <property type="term" value="P:glycolytic process"/>
    <property type="evidence" value="ECO:0007669"/>
    <property type="project" value="UniProtKB-UniRule"/>
</dbReference>
<dbReference type="CDD" id="cd05015">
    <property type="entry name" value="SIS_PGI_1"/>
    <property type="match status" value="1"/>
</dbReference>
<dbReference type="CDD" id="cd05016">
    <property type="entry name" value="SIS_PGI_2"/>
    <property type="match status" value="1"/>
</dbReference>
<dbReference type="FunFam" id="3.40.50.10490:FF:000021">
    <property type="entry name" value="Glucose-6-phosphate isomerase"/>
    <property type="match status" value="1"/>
</dbReference>
<dbReference type="FunFam" id="3.40.50.10490:FF:000023">
    <property type="entry name" value="Glucose-6-phosphate isomerase"/>
    <property type="match status" value="1"/>
</dbReference>
<dbReference type="Gene3D" id="3.40.50.10490">
    <property type="entry name" value="Glucose-6-phosphate isomerase like protein, domain 1"/>
    <property type="match status" value="3"/>
</dbReference>
<dbReference type="HAMAP" id="MF_00473">
    <property type="entry name" value="G6P_isomerase"/>
    <property type="match status" value="1"/>
</dbReference>
<dbReference type="InterPro" id="IPR001672">
    <property type="entry name" value="G6P_Isomerase"/>
</dbReference>
<dbReference type="InterPro" id="IPR018189">
    <property type="entry name" value="Phosphoglucose_isomerase_CS"/>
</dbReference>
<dbReference type="InterPro" id="IPR046348">
    <property type="entry name" value="SIS_dom_sf"/>
</dbReference>
<dbReference type="InterPro" id="IPR035476">
    <property type="entry name" value="SIS_PGI_1"/>
</dbReference>
<dbReference type="InterPro" id="IPR035482">
    <property type="entry name" value="SIS_PGI_2"/>
</dbReference>
<dbReference type="NCBIfam" id="NF010696">
    <property type="entry name" value="PRK14096.1"/>
    <property type="match status" value="1"/>
</dbReference>
<dbReference type="PANTHER" id="PTHR11469">
    <property type="entry name" value="GLUCOSE-6-PHOSPHATE ISOMERASE"/>
    <property type="match status" value="1"/>
</dbReference>
<dbReference type="PANTHER" id="PTHR11469:SF1">
    <property type="entry name" value="GLUCOSE-6-PHOSPHATE ISOMERASE"/>
    <property type="match status" value="1"/>
</dbReference>
<dbReference type="Pfam" id="PF00342">
    <property type="entry name" value="PGI"/>
    <property type="match status" value="1"/>
</dbReference>
<dbReference type="PRINTS" id="PR00662">
    <property type="entry name" value="G6PISOMERASE"/>
</dbReference>
<dbReference type="SUPFAM" id="SSF53697">
    <property type="entry name" value="SIS domain"/>
    <property type="match status" value="1"/>
</dbReference>
<dbReference type="PROSITE" id="PS00174">
    <property type="entry name" value="P_GLUCOSE_ISOMERASE_2"/>
    <property type="match status" value="1"/>
</dbReference>
<dbReference type="PROSITE" id="PS51463">
    <property type="entry name" value="P_GLUCOSE_ISOMERASE_3"/>
    <property type="match status" value="1"/>
</dbReference>
<sequence length="530" mass="58481">MNKLELWQRYRKYLGVYPEIGMMLDLSRMNFPDDFFQLMEPLMQQALEQMAELERGGIANGDEKRMVGHYWLRNPELAPTKEISSEIGFTLRAIKEFTENIHSGAISPPNGSRYTRMLIIGIGGSALGPQFVADALGSAKDKITPFFFDNTDPDGMDLVLARIGSYLKETLTIVISKSGGTKETRNGMLEAKKAYEDRGLLFARQAVAVTGRDSELDRTAAAEGWLARFPMWDWIGGRTSVTSAVGLLPAALQGLDIDGLLEGARLCDMVTRIRETRNNPAALLALMWHYATGGCGAKDMVILPYKDRLLLFSRYLQQLIMESIGKEFDRNGTQANQGIAVYGNKGSTDQHAYVQQLREGINNFFVTFIEVLKDRNGRSIEVDPGVTSGDYLSGFFQGTREALYEKGRESITITVDELSPRTIGVLIALYERAVGFYASLVNINAYHQPGVEAGKKAAGVVLEIQGKVLAHLQEKKGRGFTAEELAAAIGAEGEAEAIYRILLHAAANPDHSVVAEKGRTVFDKKFYHGG</sequence>
<accession>B9M5A2</accession>
<keyword id="KW-0963">Cytoplasm</keyword>
<keyword id="KW-0312">Gluconeogenesis</keyword>
<keyword id="KW-0324">Glycolysis</keyword>
<keyword id="KW-0413">Isomerase</keyword>
<keyword id="KW-1185">Reference proteome</keyword>
<proteinExistence type="inferred from homology"/>
<evidence type="ECO:0000255" key="1">
    <source>
        <dbReference type="HAMAP-Rule" id="MF_00473"/>
    </source>
</evidence>
<comment type="function">
    <text evidence="1">Catalyzes the reversible isomerization of glucose-6-phosphate to fructose-6-phosphate.</text>
</comment>
<comment type="catalytic activity">
    <reaction evidence="1">
        <text>alpha-D-glucose 6-phosphate = beta-D-fructose 6-phosphate</text>
        <dbReference type="Rhea" id="RHEA:11816"/>
        <dbReference type="ChEBI" id="CHEBI:57634"/>
        <dbReference type="ChEBI" id="CHEBI:58225"/>
        <dbReference type="EC" id="5.3.1.9"/>
    </reaction>
</comment>
<comment type="pathway">
    <text evidence="1">Carbohydrate biosynthesis; gluconeogenesis.</text>
</comment>
<comment type="pathway">
    <text evidence="1">Carbohydrate degradation; glycolysis; D-glyceraldehyde 3-phosphate and glycerone phosphate from D-glucose: step 2/4.</text>
</comment>
<comment type="subcellular location">
    <subcellularLocation>
        <location evidence="1">Cytoplasm</location>
    </subcellularLocation>
</comment>
<comment type="similarity">
    <text evidence="1">Belongs to the GPI family.</text>
</comment>
<organism>
    <name type="scientific">Geotalea daltonii (strain DSM 22248 / JCM 15807 / FRC-32)</name>
    <name type="common">Geobacter daltonii</name>
    <dbReference type="NCBI Taxonomy" id="316067"/>
    <lineage>
        <taxon>Bacteria</taxon>
        <taxon>Pseudomonadati</taxon>
        <taxon>Thermodesulfobacteriota</taxon>
        <taxon>Desulfuromonadia</taxon>
        <taxon>Geobacterales</taxon>
        <taxon>Geobacteraceae</taxon>
        <taxon>Geotalea</taxon>
    </lineage>
</organism>
<feature type="chain" id="PRO_1000135530" description="Glucose-6-phosphate isomerase">
    <location>
        <begin position="1"/>
        <end position="530"/>
    </location>
</feature>
<feature type="active site" description="Proton donor" evidence="1">
    <location>
        <position position="322"/>
    </location>
</feature>
<feature type="active site" evidence="1">
    <location>
        <position position="351"/>
    </location>
</feature>
<feature type="active site" evidence="1">
    <location>
        <position position="455"/>
    </location>
</feature>
<reference key="1">
    <citation type="submission" date="2009-01" db="EMBL/GenBank/DDBJ databases">
        <title>Complete sequence of Geobacter sp. FRC-32.</title>
        <authorList>
            <consortium name="US DOE Joint Genome Institute"/>
            <person name="Lucas S."/>
            <person name="Copeland A."/>
            <person name="Lapidus A."/>
            <person name="Glavina del Rio T."/>
            <person name="Dalin E."/>
            <person name="Tice H."/>
            <person name="Bruce D."/>
            <person name="Goodwin L."/>
            <person name="Pitluck S."/>
            <person name="Saunders E."/>
            <person name="Brettin T."/>
            <person name="Detter J.C."/>
            <person name="Han C."/>
            <person name="Larimer F."/>
            <person name="Land M."/>
            <person name="Hauser L."/>
            <person name="Kyrpides N."/>
            <person name="Ovchinnikova G."/>
            <person name="Kostka J."/>
            <person name="Richardson P."/>
        </authorList>
    </citation>
    <scope>NUCLEOTIDE SEQUENCE [LARGE SCALE GENOMIC DNA]</scope>
    <source>
        <strain>DSM 22248 / JCM 15807 / FRC-32</strain>
    </source>
</reference>
<protein>
    <recommendedName>
        <fullName evidence="1">Glucose-6-phosphate isomerase</fullName>
        <shortName evidence="1">GPI</shortName>
        <ecNumber evidence="1">5.3.1.9</ecNumber>
    </recommendedName>
    <alternativeName>
        <fullName evidence="1">Phosphoglucose isomerase</fullName>
        <shortName evidence="1">PGI</shortName>
    </alternativeName>
    <alternativeName>
        <fullName evidence="1">Phosphohexose isomerase</fullName>
        <shortName evidence="1">PHI</shortName>
    </alternativeName>
</protein>
<name>G6PI_GEODF</name>
<gene>
    <name evidence="1" type="primary">pgi</name>
    <name type="ordered locus">Geob_1498</name>
</gene>